<sequence length="127" mass="13969">MSNTDSKTGPNTDPATCELDPAIAERVRFNADGLVPAIVQDITNGDVLMMAWMNDHALAHTLATKKGTYWSRSRQSYWIKGETSGHTQRVEEVRLDCDGDTVLLKIEQTGAACHTGNRTCFDADRLA</sequence>
<name>HIS3_CORJK</name>
<protein>
    <recommendedName>
        <fullName evidence="1">Phosphoribosyl-AMP cyclohydrolase</fullName>
        <shortName evidence="1">PRA-CH</shortName>
        <ecNumber evidence="1">3.5.4.19</ecNumber>
    </recommendedName>
</protein>
<proteinExistence type="inferred from homology"/>
<organism>
    <name type="scientific">Corynebacterium jeikeium (strain K411)</name>
    <dbReference type="NCBI Taxonomy" id="306537"/>
    <lineage>
        <taxon>Bacteria</taxon>
        <taxon>Bacillati</taxon>
        <taxon>Actinomycetota</taxon>
        <taxon>Actinomycetes</taxon>
        <taxon>Mycobacteriales</taxon>
        <taxon>Corynebacteriaceae</taxon>
        <taxon>Corynebacterium</taxon>
    </lineage>
</organism>
<comment type="function">
    <text evidence="1">Catalyzes the hydrolysis of the adenine ring of phosphoribosyl-AMP.</text>
</comment>
<comment type="catalytic activity">
    <reaction evidence="1">
        <text>1-(5-phospho-beta-D-ribosyl)-5'-AMP + H2O = 1-(5-phospho-beta-D-ribosyl)-5-[(5-phospho-beta-D-ribosylamino)methylideneamino]imidazole-4-carboxamide</text>
        <dbReference type="Rhea" id="RHEA:20049"/>
        <dbReference type="ChEBI" id="CHEBI:15377"/>
        <dbReference type="ChEBI" id="CHEBI:58435"/>
        <dbReference type="ChEBI" id="CHEBI:59457"/>
        <dbReference type="EC" id="3.5.4.19"/>
    </reaction>
</comment>
<comment type="cofactor">
    <cofactor evidence="1">
        <name>Mg(2+)</name>
        <dbReference type="ChEBI" id="CHEBI:18420"/>
    </cofactor>
    <text evidence="1">Binds 1 Mg(2+) ion per subunit.</text>
</comment>
<comment type="cofactor">
    <cofactor evidence="1">
        <name>Zn(2+)</name>
        <dbReference type="ChEBI" id="CHEBI:29105"/>
    </cofactor>
    <text evidence="1">Binds 1 zinc ion per subunit.</text>
</comment>
<comment type="pathway">
    <text evidence="1">Amino-acid biosynthesis; L-histidine biosynthesis; L-histidine from 5-phospho-alpha-D-ribose 1-diphosphate: step 3/9.</text>
</comment>
<comment type="subunit">
    <text evidence="1">Homodimer.</text>
</comment>
<comment type="subcellular location">
    <subcellularLocation>
        <location evidence="1">Cytoplasm</location>
    </subcellularLocation>
</comment>
<comment type="similarity">
    <text evidence="1">Belongs to the PRA-CH family.</text>
</comment>
<keyword id="KW-0028">Amino-acid biosynthesis</keyword>
<keyword id="KW-0963">Cytoplasm</keyword>
<keyword id="KW-0368">Histidine biosynthesis</keyword>
<keyword id="KW-0378">Hydrolase</keyword>
<keyword id="KW-0460">Magnesium</keyword>
<keyword id="KW-0479">Metal-binding</keyword>
<keyword id="KW-1185">Reference proteome</keyword>
<keyword id="KW-0862">Zinc</keyword>
<dbReference type="EC" id="3.5.4.19" evidence="1"/>
<dbReference type="EMBL" id="CR931997">
    <property type="protein sequence ID" value="CAI36956.1"/>
    <property type="molecule type" value="Genomic_DNA"/>
</dbReference>
<dbReference type="RefSeq" id="WP_011273398.1">
    <property type="nucleotide sequence ID" value="NC_007164.1"/>
</dbReference>
<dbReference type="SMR" id="Q4JW51"/>
<dbReference type="STRING" id="306537.jk0794"/>
<dbReference type="KEGG" id="cjk:jk0794"/>
<dbReference type="PATRIC" id="fig|306537.10.peg.803"/>
<dbReference type="eggNOG" id="COG0139">
    <property type="taxonomic scope" value="Bacteria"/>
</dbReference>
<dbReference type="HOGENOM" id="CLU_048577_5_1_11"/>
<dbReference type="OrthoDB" id="9795769at2"/>
<dbReference type="UniPathway" id="UPA00031">
    <property type="reaction ID" value="UER00008"/>
</dbReference>
<dbReference type="Proteomes" id="UP000000545">
    <property type="component" value="Chromosome"/>
</dbReference>
<dbReference type="GO" id="GO:0005737">
    <property type="term" value="C:cytoplasm"/>
    <property type="evidence" value="ECO:0007669"/>
    <property type="project" value="UniProtKB-SubCell"/>
</dbReference>
<dbReference type="GO" id="GO:0000287">
    <property type="term" value="F:magnesium ion binding"/>
    <property type="evidence" value="ECO:0007669"/>
    <property type="project" value="UniProtKB-UniRule"/>
</dbReference>
<dbReference type="GO" id="GO:0004635">
    <property type="term" value="F:phosphoribosyl-AMP cyclohydrolase activity"/>
    <property type="evidence" value="ECO:0007669"/>
    <property type="project" value="UniProtKB-UniRule"/>
</dbReference>
<dbReference type="GO" id="GO:0008270">
    <property type="term" value="F:zinc ion binding"/>
    <property type="evidence" value="ECO:0007669"/>
    <property type="project" value="UniProtKB-UniRule"/>
</dbReference>
<dbReference type="GO" id="GO:0000105">
    <property type="term" value="P:L-histidine biosynthetic process"/>
    <property type="evidence" value="ECO:0007669"/>
    <property type="project" value="UniProtKB-UniRule"/>
</dbReference>
<dbReference type="FunFam" id="3.10.20.810:FF:000001">
    <property type="entry name" value="Histidine biosynthesis bifunctional protein HisIE"/>
    <property type="match status" value="1"/>
</dbReference>
<dbReference type="Gene3D" id="3.10.20.810">
    <property type="entry name" value="Phosphoribosyl-AMP cyclohydrolase"/>
    <property type="match status" value="1"/>
</dbReference>
<dbReference type="HAMAP" id="MF_01021">
    <property type="entry name" value="HisI"/>
    <property type="match status" value="1"/>
</dbReference>
<dbReference type="InterPro" id="IPR026660">
    <property type="entry name" value="PRA-CH"/>
</dbReference>
<dbReference type="InterPro" id="IPR002496">
    <property type="entry name" value="PRib_AMP_CycHydrolase_dom"/>
</dbReference>
<dbReference type="InterPro" id="IPR038019">
    <property type="entry name" value="PRib_AMP_CycHydrolase_sf"/>
</dbReference>
<dbReference type="NCBIfam" id="NF000768">
    <property type="entry name" value="PRK00051.1"/>
    <property type="match status" value="1"/>
</dbReference>
<dbReference type="PANTHER" id="PTHR42945">
    <property type="entry name" value="HISTIDINE BIOSYNTHESIS BIFUNCTIONAL PROTEIN"/>
    <property type="match status" value="1"/>
</dbReference>
<dbReference type="PANTHER" id="PTHR42945:SF11">
    <property type="entry name" value="PHOSPHORIBOSYL-AMP CYCLOHYDROLASE"/>
    <property type="match status" value="1"/>
</dbReference>
<dbReference type="Pfam" id="PF01502">
    <property type="entry name" value="PRA-CH"/>
    <property type="match status" value="1"/>
</dbReference>
<dbReference type="SUPFAM" id="SSF141734">
    <property type="entry name" value="HisI-like"/>
    <property type="match status" value="1"/>
</dbReference>
<gene>
    <name evidence="1" type="primary">hisI</name>
    <name type="ordered locus">jk0794</name>
</gene>
<feature type="chain" id="PRO_0000229818" description="Phosphoribosyl-AMP cyclohydrolase">
    <location>
        <begin position="1"/>
        <end position="127"/>
    </location>
</feature>
<feature type="binding site" evidence="1">
    <location>
        <position position="96"/>
    </location>
    <ligand>
        <name>Mg(2+)</name>
        <dbReference type="ChEBI" id="CHEBI:18420"/>
    </ligand>
</feature>
<feature type="binding site" evidence="1">
    <location>
        <position position="97"/>
    </location>
    <ligand>
        <name>Zn(2+)</name>
        <dbReference type="ChEBI" id="CHEBI:29105"/>
        <note>ligand shared between dimeric partners</note>
    </ligand>
</feature>
<feature type="binding site" evidence="1">
    <location>
        <position position="98"/>
    </location>
    <ligand>
        <name>Mg(2+)</name>
        <dbReference type="ChEBI" id="CHEBI:18420"/>
    </ligand>
</feature>
<feature type="binding site" evidence="1">
    <location>
        <position position="100"/>
    </location>
    <ligand>
        <name>Mg(2+)</name>
        <dbReference type="ChEBI" id="CHEBI:18420"/>
    </ligand>
</feature>
<feature type="binding site" evidence="1">
    <location>
        <position position="113"/>
    </location>
    <ligand>
        <name>Zn(2+)</name>
        <dbReference type="ChEBI" id="CHEBI:29105"/>
        <note>ligand shared between dimeric partners</note>
    </ligand>
</feature>
<feature type="binding site" evidence="1">
    <location>
        <position position="120"/>
    </location>
    <ligand>
        <name>Zn(2+)</name>
        <dbReference type="ChEBI" id="CHEBI:29105"/>
        <note>ligand shared between dimeric partners</note>
    </ligand>
</feature>
<accession>Q4JW51</accession>
<evidence type="ECO:0000255" key="1">
    <source>
        <dbReference type="HAMAP-Rule" id="MF_01021"/>
    </source>
</evidence>
<reference key="1">
    <citation type="journal article" date="2005" name="J. Bacteriol.">
        <title>Complete genome sequence and analysis of the multiresistant nosocomial pathogen Corynebacterium jeikeium K411, a lipid-requiring bacterium of the human skin flora.</title>
        <authorList>
            <person name="Tauch A."/>
            <person name="Kaiser O."/>
            <person name="Hain T."/>
            <person name="Goesmann A."/>
            <person name="Weisshaar B."/>
            <person name="Albersmeier A."/>
            <person name="Bekel T."/>
            <person name="Bischoff N."/>
            <person name="Brune I."/>
            <person name="Chakraborty T."/>
            <person name="Kalinowski J."/>
            <person name="Meyer F."/>
            <person name="Rupp O."/>
            <person name="Schneiker S."/>
            <person name="Viehoever P."/>
            <person name="Puehler A."/>
        </authorList>
    </citation>
    <scope>NUCLEOTIDE SEQUENCE [LARGE SCALE GENOMIC DNA]</scope>
    <source>
        <strain>K411</strain>
    </source>
</reference>